<reference evidence="3 4" key="1">
    <citation type="journal article" date="2002" name="Biosci. Biotechnol. Biochem.">
        <title>Cloning, sequencing, and overexpression in Escherichia coli of a phenylserine dehydratase gene from Ralstonia pickettii PS22.</title>
        <authorList>
            <person name="Okuda H."/>
            <person name="Nagata S."/>
            <person name="Misono H."/>
        </authorList>
    </citation>
    <scope>NUCLEOTIDE SEQUENCE [GENOMIC DNA]</scope>
    <scope>CATALYTIC ACTIVITY</scope>
    <scope>BIOPHYSICOCHEMICAL PROPERTIES</scope>
    <source>
        <strain evidence="4">PS22</strain>
    </source>
</reference>
<reference evidence="3" key="2">
    <citation type="journal article" date="1996" name="J. Biochem.">
        <title>A novel phenylserine dehydratase from Pseudomonas pickettii PS22: purification, characterization, and sequence of its phosphopyridoxyl peptide.</title>
        <authorList>
            <person name="Okuda H."/>
            <person name="Nagata S."/>
            <person name="Misono H."/>
        </authorList>
    </citation>
    <scope>PROTEIN SEQUENCE OF 2-24 AND 28-61</scope>
    <scope>CATALYTIC ACTIVITY</scope>
    <scope>ACTIVITY REGULATION</scope>
    <scope>COFACTOR</scope>
    <scope>BIOPHYSICOCHEMICAL PROPERTIES</scope>
    <scope>SUBUNIT</scope>
    <scope>INDUCTION</scope>
    <source>
        <strain evidence="2">PS22</strain>
    </source>
</reference>
<organism>
    <name type="scientific">Ralstonia pickettii</name>
    <name type="common">Burkholderia pickettii</name>
    <dbReference type="NCBI Taxonomy" id="329"/>
    <lineage>
        <taxon>Bacteria</taxon>
        <taxon>Pseudomonadati</taxon>
        <taxon>Pseudomonadota</taxon>
        <taxon>Betaproteobacteria</taxon>
        <taxon>Burkholderiales</taxon>
        <taxon>Burkholderiaceae</taxon>
        <taxon>Ralstonia</taxon>
    </lineage>
</organism>
<name>FSDH_RALPI</name>
<evidence type="ECO:0000269" key="1">
    <source>
    </source>
</evidence>
<evidence type="ECO:0000269" key="2">
    <source>
    </source>
</evidence>
<evidence type="ECO:0000305" key="3"/>
<evidence type="ECO:0000312" key="4">
    <source>
        <dbReference type="EMBL" id="BAC53614.1"/>
    </source>
</evidence>
<protein>
    <recommendedName>
        <fullName>Phenylserine dehydratase</fullName>
        <ecNumber>4.2.1.-</ecNumber>
    </recommendedName>
</protein>
<feature type="initiator methionine" description="Removed" evidence="2">
    <location>
        <position position="1"/>
    </location>
</feature>
<feature type="chain" id="PRO_0000076220" description="Phenylserine dehydratase">
    <location>
        <begin position="2"/>
        <end position="326"/>
    </location>
</feature>
<sequence>MTQLDTTTLPDLSAIAGLRARLKQWVRTTPVFDKTDFEPVPGTAVNFKLELLQASGTFKARGAFSNLLALDDDQRAAGVTCVSAGNHAVGVAYAAMRLGIPAKVVMIKTASPARVALCRQYGAEVVLAENGQTAFDTVHRIESEEGRFFVHPFNGYRTVLGTATLGHEWLEQAGALDAVIVPIGGGGLMAGVSTAVKLLAPQCQVIGVEPEGADAMHRSFETGGPVKMGSMQSIADSLMAPHTEQYSYELCRRNVDRLVKVSDDELRAAMRLLFDQLKLATEPACATATAALVGGLKAELAGKRVGVLLCGTNTDAATFARHLGLG</sequence>
<proteinExistence type="evidence at protein level"/>
<keyword id="KW-0903">Direct protein sequencing</keyword>
<keyword id="KW-0456">Lyase</keyword>
<keyword id="KW-0663">Pyridoxal phosphate</keyword>
<dbReference type="EC" id="4.2.1.-"/>
<dbReference type="EMBL" id="AB076802">
    <property type="protein sequence ID" value="BAC53614.1"/>
    <property type="molecule type" value="Genomic_DNA"/>
</dbReference>
<dbReference type="SMR" id="Q10725"/>
<dbReference type="GO" id="GO:0003941">
    <property type="term" value="F:L-serine ammonia-lyase activity"/>
    <property type="evidence" value="ECO:0007669"/>
    <property type="project" value="TreeGrafter"/>
</dbReference>
<dbReference type="GO" id="GO:0016829">
    <property type="term" value="F:lyase activity"/>
    <property type="evidence" value="ECO:0000314"/>
    <property type="project" value="UniProtKB"/>
</dbReference>
<dbReference type="GO" id="GO:0004794">
    <property type="term" value="F:threonine deaminase activity"/>
    <property type="evidence" value="ECO:0007669"/>
    <property type="project" value="TreeGrafter"/>
</dbReference>
<dbReference type="GO" id="GO:0009097">
    <property type="term" value="P:isoleucine biosynthetic process"/>
    <property type="evidence" value="ECO:0007669"/>
    <property type="project" value="TreeGrafter"/>
</dbReference>
<dbReference type="GO" id="GO:0006565">
    <property type="term" value="P:L-serine catabolic process"/>
    <property type="evidence" value="ECO:0007669"/>
    <property type="project" value="TreeGrafter"/>
</dbReference>
<dbReference type="GO" id="GO:0006567">
    <property type="term" value="P:threonine catabolic process"/>
    <property type="evidence" value="ECO:0007669"/>
    <property type="project" value="TreeGrafter"/>
</dbReference>
<dbReference type="CDD" id="cd01562">
    <property type="entry name" value="Thr-dehyd"/>
    <property type="match status" value="1"/>
</dbReference>
<dbReference type="FunFam" id="3.40.50.1100:FF:000057">
    <property type="entry name" value="Threonine dehydratase"/>
    <property type="match status" value="1"/>
</dbReference>
<dbReference type="Gene3D" id="3.40.50.1100">
    <property type="match status" value="2"/>
</dbReference>
<dbReference type="InterPro" id="IPR050147">
    <property type="entry name" value="Ser/Thr_Dehydratase"/>
</dbReference>
<dbReference type="InterPro" id="IPR001926">
    <property type="entry name" value="TrpB-like_PALP"/>
</dbReference>
<dbReference type="InterPro" id="IPR036052">
    <property type="entry name" value="TrpB-like_PALP_sf"/>
</dbReference>
<dbReference type="PANTHER" id="PTHR48078:SF6">
    <property type="entry name" value="L-THREONINE DEHYDRATASE CATABOLIC TDCB"/>
    <property type="match status" value="1"/>
</dbReference>
<dbReference type="PANTHER" id="PTHR48078">
    <property type="entry name" value="THREONINE DEHYDRATASE, MITOCHONDRIAL-RELATED"/>
    <property type="match status" value="1"/>
</dbReference>
<dbReference type="Pfam" id="PF00291">
    <property type="entry name" value="PALP"/>
    <property type="match status" value="1"/>
</dbReference>
<dbReference type="SUPFAM" id="SSF53686">
    <property type="entry name" value="Tryptophan synthase beta subunit-like PLP-dependent enzymes"/>
    <property type="match status" value="1"/>
</dbReference>
<accession>Q10725</accession>
<accession>Q8GI87</accession>
<gene>
    <name evidence="4" type="primary">psdht</name>
</gene>
<comment type="catalytic activity">
    <reaction evidence="1 2">
        <text>L-threo-3-phenylserine = 3-phenylpyruvate + NH4(+)</text>
        <dbReference type="Rhea" id="RHEA:46328"/>
        <dbReference type="ChEBI" id="CHEBI:18005"/>
        <dbReference type="ChEBI" id="CHEBI:28938"/>
        <dbReference type="ChEBI" id="CHEBI:57901"/>
    </reaction>
</comment>
<comment type="cofactor">
    <cofactor evidence="2">
        <name>pyridoxal 5'-phosphate</name>
        <dbReference type="ChEBI" id="CHEBI:597326"/>
    </cofactor>
</comment>
<comment type="activity regulation">
    <text evidence="2">Inhibited by phenylhydrazine, hydroxylamine, p-chloromercuribenzoate, and HgCl(2).</text>
</comment>
<comment type="biophysicochemical properties">
    <kinetics>
        <KM evidence="1 2">0.2 mM for L-threo-3-phenylserine</KM>
    </kinetics>
    <phDependence>
        <text evidence="1 2">Optimum pH is 7.5.</text>
    </phDependence>
</comment>
<comment type="subunit">
    <text evidence="2">Monomer.</text>
</comment>
<comment type="induction">
    <text evidence="2">By L-threo-3-phenylserine.</text>
</comment>